<sequence>METTTKKARSLYIPYAGPVLLEFPLLNKGSAFSVEERRNFNLSGLLPEVVESIEEQAERAWLQYQGFKTEIDKHIYLRNIQDTNETLFYRLVQNHLEEMMPVIYTPTVGAACERFSEIYRRARGVFISYPNRHNMDDILQNVPNHNIKVIVVTDGERILGLGDQGIGGMGIPIGKLSLYTACGGISPAYTLPVVLDVGTNNQQLLNDPLYMGWRHPRITDDEYYAFVDEFIQAVKQRWPDILLQFEDFAQKNAMPLLTRYRDEICSFNDDIQGTAAVTVGTLIAASRAAGSQLSEQKIVFLGAGSAGCGIAEQIIAQTQREGLSEDAARQNVFMVDRFGLLTDRMPNLLPFQAKLVQKCDNLQHWDTENDVLSLLDVVRNVKPDILIGVSGQTGLFTEEIIREMHKHCPRPIVMPLSNPTSRVEATPQDIIAWTEGNALVATGSPFSPVIWKDKVYPIAQCNNAYIFPGIGLGVIASGASRITDEMLMSASETLAKHSPLVNNGEGLVLPALKDIQVVSRAIAFAVGKMAQQQGVAVKTSAEALQQAIDDNFWKPEYRDYRRTSI</sequence>
<comment type="catalytic activity">
    <reaction evidence="1">
        <text>(S)-malate + NAD(+) = pyruvate + CO2 + NADH</text>
        <dbReference type="Rhea" id="RHEA:12653"/>
        <dbReference type="ChEBI" id="CHEBI:15361"/>
        <dbReference type="ChEBI" id="CHEBI:15589"/>
        <dbReference type="ChEBI" id="CHEBI:16526"/>
        <dbReference type="ChEBI" id="CHEBI:57540"/>
        <dbReference type="ChEBI" id="CHEBI:57945"/>
        <dbReference type="EC" id="1.1.1.38"/>
    </reaction>
</comment>
<comment type="catalytic activity">
    <reaction evidence="1">
        <text>oxaloacetate + H(+) = pyruvate + CO2</text>
        <dbReference type="Rhea" id="RHEA:15641"/>
        <dbReference type="ChEBI" id="CHEBI:15361"/>
        <dbReference type="ChEBI" id="CHEBI:15378"/>
        <dbReference type="ChEBI" id="CHEBI:16452"/>
        <dbReference type="ChEBI" id="CHEBI:16526"/>
        <dbReference type="EC" id="1.1.1.38"/>
    </reaction>
</comment>
<comment type="cofactor">
    <cofactor evidence="1">
        <name>Mg(2+)</name>
        <dbReference type="ChEBI" id="CHEBI:18420"/>
    </cofactor>
    <cofactor evidence="1">
        <name>Mn(2+)</name>
        <dbReference type="ChEBI" id="CHEBI:29035"/>
    </cofactor>
    <text evidence="1">Divalent metal cations. Prefers magnesium or manganese.</text>
</comment>
<comment type="subunit">
    <text evidence="1">Homotetramer.</text>
</comment>
<comment type="similarity">
    <text evidence="1">Belongs to the malic enzymes family.</text>
</comment>
<organism>
    <name type="scientific">Salmonella schwarzengrund (strain CVM19633)</name>
    <dbReference type="NCBI Taxonomy" id="439843"/>
    <lineage>
        <taxon>Bacteria</taxon>
        <taxon>Pseudomonadati</taxon>
        <taxon>Pseudomonadota</taxon>
        <taxon>Gammaproteobacteria</taxon>
        <taxon>Enterobacterales</taxon>
        <taxon>Enterobacteriaceae</taxon>
        <taxon>Salmonella</taxon>
    </lineage>
</organism>
<accession>B4TW15</accession>
<reference key="1">
    <citation type="journal article" date="2011" name="J. Bacteriol.">
        <title>Comparative genomics of 28 Salmonella enterica isolates: evidence for CRISPR-mediated adaptive sublineage evolution.</title>
        <authorList>
            <person name="Fricke W.F."/>
            <person name="Mammel M.K."/>
            <person name="McDermott P.F."/>
            <person name="Tartera C."/>
            <person name="White D.G."/>
            <person name="Leclerc J.E."/>
            <person name="Ravel J."/>
            <person name="Cebula T.A."/>
        </authorList>
    </citation>
    <scope>NUCLEOTIDE SEQUENCE [LARGE SCALE GENOMIC DNA]</scope>
    <source>
        <strain>CVM19633</strain>
    </source>
</reference>
<evidence type="ECO:0000255" key="1">
    <source>
        <dbReference type="HAMAP-Rule" id="MF_01619"/>
    </source>
</evidence>
<protein>
    <recommendedName>
        <fullName evidence="1">NAD-dependent malic enzyme</fullName>
        <shortName evidence="1">NAD-ME</shortName>
        <ecNumber evidence="1">1.1.1.38</ecNumber>
    </recommendedName>
</protein>
<proteinExistence type="inferred from homology"/>
<gene>
    <name evidence="1" type="primary">maeA</name>
    <name type="ordered locus">SeSA_A1682</name>
</gene>
<dbReference type="EC" id="1.1.1.38" evidence="1"/>
<dbReference type="EMBL" id="CP001127">
    <property type="protein sequence ID" value="ACF89628.1"/>
    <property type="molecule type" value="Genomic_DNA"/>
</dbReference>
<dbReference type="RefSeq" id="WP_000450511.1">
    <property type="nucleotide sequence ID" value="NC_011094.1"/>
</dbReference>
<dbReference type="SMR" id="B4TW15"/>
<dbReference type="KEGG" id="sew:SeSA_A1682"/>
<dbReference type="HOGENOM" id="CLU_011405_5_2_6"/>
<dbReference type="Proteomes" id="UP000001865">
    <property type="component" value="Chromosome"/>
</dbReference>
<dbReference type="GO" id="GO:0005829">
    <property type="term" value="C:cytosol"/>
    <property type="evidence" value="ECO:0007669"/>
    <property type="project" value="TreeGrafter"/>
</dbReference>
<dbReference type="GO" id="GO:0004471">
    <property type="term" value="F:malate dehydrogenase (decarboxylating) (NAD+) activity"/>
    <property type="evidence" value="ECO:0007669"/>
    <property type="project" value="UniProtKB-UniRule"/>
</dbReference>
<dbReference type="GO" id="GO:0046872">
    <property type="term" value="F:metal ion binding"/>
    <property type="evidence" value="ECO:0007669"/>
    <property type="project" value="UniProtKB-KW"/>
</dbReference>
<dbReference type="GO" id="GO:0051287">
    <property type="term" value="F:NAD binding"/>
    <property type="evidence" value="ECO:0007669"/>
    <property type="project" value="InterPro"/>
</dbReference>
<dbReference type="GO" id="GO:0008948">
    <property type="term" value="F:oxaloacetate decarboxylase activity"/>
    <property type="evidence" value="ECO:0007669"/>
    <property type="project" value="UniProtKB-UniRule"/>
</dbReference>
<dbReference type="GO" id="GO:0006108">
    <property type="term" value="P:malate metabolic process"/>
    <property type="evidence" value="ECO:0007669"/>
    <property type="project" value="TreeGrafter"/>
</dbReference>
<dbReference type="CDD" id="cd05312">
    <property type="entry name" value="NAD_bind_1_malic_enz"/>
    <property type="match status" value="1"/>
</dbReference>
<dbReference type="FunFam" id="3.40.50.10380:FF:000001">
    <property type="entry name" value="NAD-dependent malic enzyme"/>
    <property type="match status" value="1"/>
</dbReference>
<dbReference type="FunFam" id="3.40.50.720:FF:000055">
    <property type="entry name" value="NAD-dependent malic enzyme"/>
    <property type="match status" value="1"/>
</dbReference>
<dbReference type="Gene3D" id="3.40.50.10380">
    <property type="entry name" value="Malic enzyme, N-terminal domain"/>
    <property type="match status" value="1"/>
</dbReference>
<dbReference type="Gene3D" id="3.40.50.720">
    <property type="entry name" value="NAD(P)-binding Rossmann-like Domain"/>
    <property type="match status" value="1"/>
</dbReference>
<dbReference type="HAMAP" id="MF_01619">
    <property type="entry name" value="NAD_malic_enz"/>
    <property type="match status" value="1"/>
</dbReference>
<dbReference type="InterPro" id="IPR046346">
    <property type="entry name" value="Aminoacid_DH-like_N_sf"/>
</dbReference>
<dbReference type="InterPro" id="IPR015884">
    <property type="entry name" value="Malic_enzyme_CS"/>
</dbReference>
<dbReference type="InterPro" id="IPR012301">
    <property type="entry name" value="Malic_N_dom"/>
</dbReference>
<dbReference type="InterPro" id="IPR037062">
    <property type="entry name" value="Malic_N_dom_sf"/>
</dbReference>
<dbReference type="InterPro" id="IPR012302">
    <property type="entry name" value="Malic_NAD-bd"/>
</dbReference>
<dbReference type="InterPro" id="IPR001891">
    <property type="entry name" value="Malic_OxRdtase"/>
</dbReference>
<dbReference type="InterPro" id="IPR036291">
    <property type="entry name" value="NAD(P)-bd_dom_sf"/>
</dbReference>
<dbReference type="InterPro" id="IPR023667">
    <property type="entry name" value="NAD_malic_enz_proteobac"/>
</dbReference>
<dbReference type="NCBIfam" id="NF010052">
    <property type="entry name" value="PRK13529.1"/>
    <property type="match status" value="1"/>
</dbReference>
<dbReference type="PANTHER" id="PTHR23406">
    <property type="entry name" value="MALIC ENZYME-RELATED"/>
    <property type="match status" value="1"/>
</dbReference>
<dbReference type="PANTHER" id="PTHR23406:SF34">
    <property type="entry name" value="NAD-DEPENDENT MALIC ENZYME, MITOCHONDRIAL"/>
    <property type="match status" value="1"/>
</dbReference>
<dbReference type="Pfam" id="PF00390">
    <property type="entry name" value="malic"/>
    <property type="match status" value="1"/>
</dbReference>
<dbReference type="Pfam" id="PF03949">
    <property type="entry name" value="Malic_M"/>
    <property type="match status" value="1"/>
</dbReference>
<dbReference type="PIRSF" id="PIRSF000106">
    <property type="entry name" value="ME"/>
    <property type="match status" value="1"/>
</dbReference>
<dbReference type="PRINTS" id="PR00072">
    <property type="entry name" value="MALOXRDTASE"/>
</dbReference>
<dbReference type="SMART" id="SM01274">
    <property type="entry name" value="malic"/>
    <property type="match status" value="1"/>
</dbReference>
<dbReference type="SMART" id="SM00919">
    <property type="entry name" value="Malic_M"/>
    <property type="match status" value="1"/>
</dbReference>
<dbReference type="SUPFAM" id="SSF53223">
    <property type="entry name" value="Aminoacid dehydrogenase-like, N-terminal domain"/>
    <property type="match status" value="1"/>
</dbReference>
<dbReference type="SUPFAM" id="SSF51735">
    <property type="entry name" value="NAD(P)-binding Rossmann-fold domains"/>
    <property type="match status" value="1"/>
</dbReference>
<dbReference type="PROSITE" id="PS00331">
    <property type="entry name" value="MALIC_ENZYMES"/>
    <property type="match status" value="1"/>
</dbReference>
<keyword id="KW-0479">Metal-binding</keyword>
<keyword id="KW-0520">NAD</keyword>
<keyword id="KW-0560">Oxidoreductase</keyword>
<feature type="chain" id="PRO_1000186009" description="NAD-dependent malic enzyme">
    <location>
        <begin position="1"/>
        <end position="565"/>
    </location>
</feature>
<feature type="active site" description="Proton donor" evidence="1">
    <location>
        <position position="104"/>
    </location>
</feature>
<feature type="active site" description="Proton acceptor" evidence="1">
    <location>
        <position position="175"/>
    </location>
</feature>
<feature type="binding site" evidence="1">
    <location>
        <position position="157"/>
    </location>
    <ligand>
        <name>NAD(+)</name>
        <dbReference type="ChEBI" id="CHEBI:57540"/>
    </ligand>
</feature>
<feature type="binding site" evidence="1">
    <location>
        <position position="246"/>
    </location>
    <ligand>
        <name>a divalent metal cation</name>
        <dbReference type="ChEBI" id="CHEBI:60240"/>
    </ligand>
</feature>
<feature type="binding site" evidence="1">
    <location>
        <position position="247"/>
    </location>
    <ligand>
        <name>a divalent metal cation</name>
        <dbReference type="ChEBI" id="CHEBI:60240"/>
    </ligand>
</feature>
<feature type="binding site" evidence="1">
    <location>
        <position position="270"/>
    </location>
    <ligand>
        <name>a divalent metal cation</name>
        <dbReference type="ChEBI" id="CHEBI:60240"/>
    </ligand>
</feature>
<feature type="binding site" evidence="1">
    <location>
        <position position="270"/>
    </location>
    <ligand>
        <name>NAD(+)</name>
        <dbReference type="ChEBI" id="CHEBI:57540"/>
    </ligand>
</feature>
<feature type="binding site" evidence="1">
    <location>
        <position position="418"/>
    </location>
    <ligand>
        <name>NAD(+)</name>
        <dbReference type="ChEBI" id="CHEBI:57540"/>
    </ligand>
</feature>
<feature type="site" description="Important for activity" evidence="1">
    <location>
        <position position="270"/>
    </location>
</feature>
<name>MAO1_SALSV</name>